<feature type="signal peptide" evidence="3">
    <location>
        <begin position="1"/>
        <end position="22"/>
    </location>
</feature>
<feature type="propeptide" id="PRO_0000003802" evidence="1">
    <location>
        <begin position="23"/>
        <end position="138"/>
    </location>
</feature>
<feature type="chain" id="PRO_0000003803" description="Cadherin-13">
    <location>
        <begin position="139"/>
        <end position="693"/>
    </location>
</feature>
<feature type="propeptide" id="PRO_0000003804" description="Removed in mature form" evidence="3">
    <location>
        <begin position="694"/>
        <end position="712"/>
    </location>
</feature>
<feature type="domain" description="Cadherin 1" evidence="4">
    <location>
        <begin position="143"/>
        <end position="245"/>
    </location>
</feature>
<feature type="domain" description="Cadherin 2" evidence="4">
    <location>
        <begin position="246"/>
        <end position="363"/>
    </location>
</feature>
<feature type="domain" description="Cadherin 3" evidence="4">
    <location>
        <begin position="364"/>
        <end position="477"/>
    </location>
</feature>
<feature type="domain" description="Cadherin 4" evidence="4">
    <location>
        <begin position="478"/>
        <end position="585"/>
    </location>
</feature>
<feature type="domain" description="Cadherin 5" evidence="4">
    <location>
        <begin position="586"/>
        <end position="680"/>
    </location>
</feature>
<feature type="lipid moiety-binding region" description="GPI-anchor amidated aspartate" evidence="3">
    <location>
        <position position="693"/>
    </location>
</feature>
<feature type="glycosylation site" description="N-linked (GlcNAc...) asparagine" evidence="3">
    <location>
        <position position="86"/>
    </location>
</feature>
<feature type="glycosylation site" description="N-linked (GlcNAc...) asparagine" evidence="3">
    <location>
        <position position="382"/>
    </location>
</feature>
<feature type="glycosylation site" description="N-linked (GlcNAc...) asparagine" evidence="3">
    <location>
        <position position="500"/>
    </location>
</feature>
<feature type="glycosylation site" description="N-linked (GlcNAc...) asparagine" evidence="3">
    <location>
        <position position="530"/>
    </location>
</feature>
<feature type="glycosylation site" description="N-linked (GlcNAc...) asparagine" evidence="3">
    <location>
        <position position="638"/>
    </location>
</feature>
<feature type="glycosylation site" description="N-linked (GlcNAc...) asparagine" evidence="3">
    <location>
        <position position="671"/>
    </location>
</feature>
<feature type="splice variant" id="VSP_000642" description="In isoform 2." evidence="6">
    <original>L</original>
    <variation>KSFPYV</variation>
    <location>
        <position position="712"/>
    </location>
</feature>
<feature type="strand" evidence="8">
    <location>
        <begin position="145"/>
        <end position="148"/>
    </location>
</feature>
<feature type="strand" evidence="8">
    <location>
        <begin position="153"/>
        <end position="155"/>
    </location>
</feature>
<feature type="strand" evidence="8">
    <location>
        <begin position="157"/>
        <end position="161"/>
    </location>
</feature>
<feature type="strand" evidence="8">
    <location>
        <begin position="169"/>
        <end position="178"/>
    </location>
</feature>
<feature type="turn" evidence="8">
    <location>
        <begin position="179"/>
        <end position="181"/>
    </location>
</feature>
<feature type="strand" evidence="8">
    <location>
        <begin position="182"/>
        <end position="184"/>
    </location>
</feature>
<feature type="strand" evidence="8">
    <location>
        <begin position="187"/>
        <end position="190"/>
    </location>
</feature>
<feature type="turn" evidence="8">
    <location>
        <begin position="192"/>
        <end position="194"/>
    </location>
</feature>
<feature type="strand" evidence="8">
    <location>
        <begin position="196"/>
        <end position="199"/>
    </location>
</feature>
<feature type="turn" evidence="8">
    <location>
        <begin position="205"/>
        <end position="207"/>
    </location>
</feature>
<feature type="strand" evidence="8">
    <location>
        <begin position="210"/>
        <end position="219"/>
    </location>
</feature>
<feature type="strand" evidence="8">
    <location>
        <begin position="224"/>
        <end position="236"/>
    </location>
</feature>
<feature type="strand" evidence="7">
    <location>
        <begin position="250"/>
        <end position="257"/>
    </location>
</feature>
<feature type="strand" evidence="7">
    <location>
        <begin position="263"/>
        <end position="266"/>
    </location>
</feature>
<feature type="strand" evidence="7">
    <location>
        <begin position="277"/>
        <end position="280"/>
    </location>
</feature>
<feature type="strand" evidence="7">
    <location>
        <begin position="283"/>
        <end position="290"/>
    </location>
</feature>
<feature type="strand" evidence="7">
    <location>
        <begin position="299"/>
        <end position="301"/>
    </location>
</feature>
<feature type="turn" evidence="7">
    <location>
        <begin position="303"/>
        <end position="305"/>
    </location>
</feature>
<feature type="strand" evidence="7">
    <location>
        <begin position="307"/>
        <end position="310"/>
    </location>
</feature>
<feature type="strand" evidence="7">
    <location>
        <begin position="314"/>
        <end position="317"/>
    </location>
</feature>
<feature type="strand" evidence="7">
    <location>
        <begin position="319"/>
        <end position="335"/>
    </location>
</feature>
<feature type="helix" evidence="7">
    <location>
        <begin position="336"/>
        <end position="338"/>
    </location>
</feature>
<feature type="strand" evidence="7">
    <location>
        <begin position="344"/>
        <end position="354"/>
    </location>
</feature>
<sequence length="712" mass="78381">MQHKTQLTLSFLLSQVLLLACAEDLECTPGFQQKVFYIEQPFEFTEDQPILNLVFDDCKGNNKLNFEVSNPDFKVEHDGSLVALKNVSEAGRALFVHARSEHAEDMAEILIVGADEKHDALKEIFKIEGNLGIPRQKRAILATPILIPENQRPPFPRSVGKVIRSEGTEGAKFRLSGKGVDQDPKGIFRINEISGDVSVTRPLDREAIANYELEVEVTDLSGKIIDGPVRLDISVIDQNDNRPMFKEGPYVGHVMEGSPTGTTVMRMTAFDADDPSTDNALLRYNILKQTPTKPSPNMFYIDPEKGDIVTVVSPVLLDRETMETPKYELVIEAKDMGGHDVGLTGTATATILIDDKNDHPPEFTKKEFQATVKEGVTGVIVNLTVGDRDDPATGAWRAVYTIINGNPGQSFEIHTNPQTNEGMLSVVKPLDYEISAFHTLLIKVENEDPLIPDIAYGPSSTATVQITVEDVNEGPVFHPNPMTVTKQENIPIGSIVLTVNATDPDTLQHQTIRYSVYKDPASWLEINPTNGTVATTAVLDRESPHVQDNKYTALFLAIDSGNPPATGTGTLHITLEDVNDNVPSLYPTLAKVCDDAKDLRVVVLGASDKDLHPNTDPFKFELSKQSGPEKLWRINKLNNTHAQVVLLQNLKKANYNIPISVTDSGKPPLTNNTELKLQVCSCKKSRMDCSASDALHISMTLILLSLFSLFCL</sequence>
<evidence type="ECO:0000250" key="1"/>
<evidence type="ECO:0000250" key="2">
    <source>
        <dbReference type="UniProtKB" id="Q9WTR5"/>
    </source>
</evidence>
<evidence type="ECO:0000255" key="3"/>
<evidence type="ECO:0000255" key="4">
    <source>
        <dbReference type="PROSITE-ProRule" id="PRU00043"/>
    </source>
</evidence>
<evidence type="ECO:0000269" key="5">
    <source>
    </source>
</evidence>
<evidence type="ECO:0000303" key="6">
    <source>
    </source>
</evidence>
<evidence type="ECO:0007829" key="7">
    <source>
        <dbReference type="PDB" id="3K5S"/>
    </source>
</evidence>
<evidence type="ECO:0007829" key="8">
    <source>
        <dbReference type="PDB" id="3K6I"/>
    </source>
</evidence>
<dbReference type="EMBL" id="M81779">
    <property type="protein sequence ID" value="AAA49079.1"/>
    <property type="molecule type" value="mRNA"/>
</dbReference>
<dbReference type="EMBL" id="S62757">
    <property type="protein sequence ID" value="AAB27242.1"/>
    <property type="molecule type" value="mRNA"/>
</dbReference>
<dbReference type="PIR" id="I51206">
    <property type="entry name" value="I51206"/>
</dbReference>
<dbReference type="PIR" id="JU0279">
    <property type="entry name" value="IJMSCT"/>
</dbReference>
<dbReference type="RefSeq" id="NP_001001760.1">
    <property type="nucleotide sequence ID" value="NM_001001760.1"/>
</dbReference>
<dbReference type="RefSeq" id="NP_001383215.1">
    <molecule id="P33150-1"/>
    <property type="nucleotide sequence ID" value="NM_001396286.1"/>
</dbReference>
<dbReference type="RefSeq" id="XP_015148010.1">
    <property type="nucleotide sequence ID" value="XM_015292524.1"/>
</dbReference>
<dbReference type="PDB" id="3K5S">
    <property type="method" value="X-ray"/>
    <property type="resolution" value="2.90 A"/>
    <property type="chains" value="A/B=140-355"/>
</dbReference>
<dbReference type="PDB" id="3K6I">
    <property type="method" value="X-ray"/>
    <property type="resolution" value="1.13 A"/>
    <property type="chains" value="A=140-237"/>
</dbReference>
<dbReference type="PDBsum" id="3K5S"/>
<dbReference type="PDBsum" id="3K6I"/>
<dbReference type="SMR" id="P33150"/>
<dbReference type="DIP" id="DIP-58996N"/>
<dbReference type="FunCoup" id="P33150">
    <property type="interactions" value="16"/>
</dbReference>
<dbReference type="STRING" id="9031.ENSGALP00000008794"/>
<dbReference type="GlyCosmos" id="P33150">
    <property type="glycosylation" value="6 sites, No reported glycans"/>
</dbReference>
<dbReference type="GlyGen" id="P33150">
    <property type="glycosylation" value="6 sites"/>
</dbReference>
<dbReference type="PaxDb" id="9031-ENSGALP00000008794"/>
<dbReference type="Ensembl" id="ENSGALT00010017961.1">
    <molecule id="P33150-1"/>
    <property type="protein sequence ID" value="ENSGALP00010009887.1"/>
    <property type="gene ID" value="ENSGALG00010007529.1"/>
</dbReference>
<dbReference type="GeneID" id="414849"/>
<dbReference type="KEGG" id="gga:414849"/>
<dbReference type="CTD" id="1012"/>
<dbReference type="VEuPathDB" id="HostDB:geneid_414849"/>
<dbReference type="eggNOG" id="KOG3594">
    <property type="taxonomic scope" value="Eukaryota"/>
</dbReference>
<dbReference type="GeneTree" id="ENSGT00940000155218"/>
<dbReference type="InParanoid" id="P33150"/>
<dbReference type="OrthoDB" id="9933746at2759"/>
<dbReference type="PhylomeDB" id="P33150"/>
<dbReference type="Reactome" id="R-GGA-418990">
    <property type="pathway name" value="Adherens junctions interactions"/>
</dbReference>
<dbReference type="EvolutionaryTrace" id="P33150"/>
<dbReference type="PRO" id="PR:P33150"/>
<dbReference type="Proteomes" id="UP000000539">
    <property type="component" value="Chromosome 11"/>
</dbReference>
<dbReference type="Bgee" id="ENSGALG00000005483">
    <property type="expression patterns" value="Expressed in colon and 12 other cell types or tissues"/>
</dbReference>
<dbReference type="GO" id="GO:0005912">
    <property type="term" value="C:adherens junction"/>
    <property type="evidence" value="ECO:0000318"/>
    <property type="project" value="GO_Central"/>
</dbReference>
<dbReference type="GO" id="GO:0016342">
    <property type="term" value="C:catenin complex"/>
    <property type="evidence" value="ECO:0000318"/>
    <property type="project" value="GO_Central"/>
</dbReference>
<dbReference type="GO" id="GO:0009986">
    <property type="term" value="C:cell surface"/>
    <property type="evidence" value="ECO:0000314"/>
    <property type="project" value="AgBase"/>
</dbReference>
<dbReference type="GO" id="GO:0005737">
    <property type="term" value="C:cytoplasm"/>
    <property type="evidence" value="ECO:0007669"/>
    <property type="project" value="UniProtKB-SubCell"/>
</dbReference>
<dbReference type="GO" id="GO:0098552">
    <property type="term" value="C:side of membrane"/>
    <property type="evidence" value="ECO:0007669"/>
    <property type="project" value="UniProtKB-KW"/>
</dbReference>
<dbReference type="GO" id="GO:0099512">
    <property type="term" value="C:supramolecular fiber"/>
    <property type="evidence" value="ECO:0000314"/>
    <property type="project" value="AgBase"/>
</dbReference>
<dbReference type="GO" id="GO:0008013">
    <property type="term" value="F:beta-catenin binding"/>
    <property type="evidence" value="ECO:0000318"/>
    <property type="project" value="GO_Central"/>
</dbReference>
<dbReference type="GO" id="GO:0045296">
    <property type="term" value="F:cadherin binding"/>
    <property type="evidence" value="ECO:0000318"/>
    <property type="project" value="GO_Central"/>
</dbReference>
<dbReference type="GO" id="GO:0005509">
    <property type="term" value="F:calcium ion binding"/>
    <property type="evidence" value="ECO:0007669"/>
    <property type="project" value="InterPro"/>
</dbReference>
<dbReference type="GO" id="GO:0034332">
    <property type="term" value="P:adherens junction organization"/>
    <property type="evidence" value="ECO:0000318"/>
    <property type="project" value="GO_Central"/>
</dbReference>
<dbReference type="GO" id="GO:0016339">
    <property type="term" value="P:calcium-dependent cell-cell adhesion via plasma membrane cell adhesion molecules"/>
    <property type="evidence" value="ECO:0000318"/>
    <property type="project" value="GO_Central"/>
</dbReference>
<dbReference type="GO" id="GO:0016477">
    <property type="term" value="P:cell migration"/>
    <property type="evidence" value="ECO:0000318"/>
    <property type="project" value="GO_Central"/>
</dbReference>
<dbReference type="GO" id="GO:0000902">
    <property type="term" value="P:cell morphogenesis"/>
    <property type="evidence" value="ECO:0000318"/>
    <property type="project" value="GO_Central"/>
</dbReference>
<dbReference type="GO" id="GO:0044331">
    <property type="term" value="P:cell-cell adhesion mediated by cadherin"/>
    <property type="evidence" value="ECO:0000318"/>
    <property type="project" value="GO_Central"/>
</dbReference>
<dbReference type="GO" id="GO:0007043">
    <property type="term" value="P:cell-cell junction assembly"/>
    <property type="evidence" value="ECO:0000318"/>
    <property type="project" value="GO_Central"/>
</dbReference>
<dbReference type="GO" id="GO:0007156">
    <property type="term" value="P:homophilic cell adhesion via plasma membrane adhesion molecules"/>
    <property type="evidence" value="ECO:0007669"/>
    <property type="project" value="InterPro"/>
</dbReference>
<dbReference type="CDD" id="cd11304">
    <property type="entry name" value="Cadherin_repeat"/>
    <property type="match status" value="4"/>
</dbReference>
<dbReference type="FunFam" id="2.60.40.60:FF:000011">
    <property type="entry name" value="Cadherin 1"/>
    <property type="match status" value="1"/>
</dbReference>
<dbReference type="FunFam" id="2.60.40.60:FF:000095">
    <property type="entry name" value="Cadherin 13"/>
    <property type="match status" value="1"/>
</dbReference>
<dbReference type="FunFam" id="2.60.40.60:FF:000019">
    <property type="entry name" value="Cadherin 2"/>
    <property type="match status" value="1"/>
</dbReference>
<dbReference type="FunFam" id="2.60.40.60:FF:000022">
    <property type="entry name" value="Cadherin 2"/>
    <property type="match status" value="1"/>
</dbReference>
<dbReference type="FunFam" id="2.60.40.60:FF:000031">
    <property type="entry name" value="Cadherin 3"/>
    <property type="match status" value="1"/>
</dbReference>
<dbReference type="FunFam" id="2.60.40.60:FF:000148">
    <property type="entry name" value="cadherin-13 isoform X1"/>
    <property type="match status" value="1"/>
</dbReference>
<dbReference type="Gene3D" id="2.60.40.60">
    <property type="entry name" value="Cadherins"/>
    <property type="match status" value="6"/>
</dbReference>
<dbReference type="InterPro" id="IPR039808">
    <property type="entry name" value="Cadherin"/>
</dbReference>
<dbReference type="InterPro" id="IPR002126">
    <property type="entry name" value="Cadherin-like_dom"/>
</dbReference>
<dbReference type="InterPro" id="IPR015919">
    <property type="entry name" value="Cadherin-like_sf"/>
</dbReference>
<dbReference type="InterPro" id="IPR020894">
    <property type="entry name" value="Cadherin_CS"/>
</dbReference>
<dbReference type="InterPro" id="IPR014868">
    <property type="entry name" value="Cadherin_pro_dom"/>
</dbReference>
<dbReference type="PANTHER" id="PTHR24027:SF80">
    <property type="entry name" value="CADHERIN-13"/>
    <property type="match status" value="1"/>
</dbReference>
<dbReference type="PANTHER" id="PTHR24027">
    <property type="entry name" value="CADHERIN-23"/>
    <property type="match status" value="1"/>
</dbReference>
<dbReference type="Pfam" id="PF00028">
    <property type="entry name" value="Cadherin"/>
    <property type="match status" value="5"/>
</dbReference>
<dbReference type="Pfam" id="PF08758">
    <property type="entry name" value="Cadherin_pro"/>
    <property type="match status" value="1"/>
</dbReference>
<dbReference type="PRINTS" id="PR00205">
    <property type="entry name" value="CADHERIN"/>
</dbReference>
<dbReference type="SMART" id="SM00112">
    <property type="entry name" value="CA"/>
    <property type="match status" value="5"/>
</dbReference>
<dbReference type="SMART" id="SM01055">
    <property type="entry name" value="Cadherin_pro"/>
    <property type="match status" value="1"/>
</dbReference>
<dbReference type="SUPFAM" id="SSF49313">
    <property type="entry name" value="Cadherin-like"/>
    <property type="match status" value="6"/>
</dbReference>
<dbReference type="PROSITE" id="PS00232">
    <property type="entry name" value="CADHERIN_1"/>
    <property type="match status" value="3"/>
</dbReference>
<dbReference type="PROSITE" id="PS50268">
    <property type="entry name" value="CADHERIN_2"/>
    <property type="match status" value="5"/>
</dbReference>
<proteinExistence type="evidence at protein level"/>
<keyword id="KW-0002">3D-structure</keyword>
<keyword id="KW-0025">Alternative splicing</keyword>
<keyword id="KW-0106">Calcium</keyword>
<keyword id="KW-0130">Cell adhesion</keyword>
<keyword id="KW-1003">Cell membrane</keyword>
<keyword id="KW-0165">Cleavage on pair of basic residues</keyword>
<keyword id="KW-0963">Cytoplasm</keyword>
<keyword id="KW-0903">Direct protein sequencing</keyword>
<keyword id="KW-0325">Glycoprotein</keyword>
<keyword id="KW-0336">GPI-anchor</keyword>
<keyword id="KW-0449">Lipoprotein</keyword>
<keyword id="KW-0472">Membrane</keyword>
<keyword id="KW-0479">Metal-binding</keyword>
<keyword id="KW-1185">Reference proteome</keyword>
<keyword id="KW-0677">Repeat</keyword>
<keyword id="KW-0732">Signal</keyword>
<comment type="function">
    <text>Cadherins are calcium-dependent cell adhesion proteins. They preferentially interact with themselves in a homophilic manner in connecting cells; cadherins may thus contribute to the sorting of heterogeneous cell types. May act as a negative regulator of neural cell growth.</text>
</comment>
<comment type="subunit">
    <text evidence="5">By contrast to classical cadherins, homodimerization in trans is not mediated by cadherin EC1 domain strand-swapping, but instead through a homophilic adhesive interface which joins two elongated EC1-EC2 domains through a region near their Ca2+-binding sites to form a tetrahedral, X-like shape.</text>
</comment>
<comment type="subcellular location">
    <subcellularLocation>
        <location evidence="2">Cell membrane</location>
        <topology evidence="3">Lipid-anchor</topology>
        <topology evidence="3">GPI-anchor</topology>
    </subcellularLocation>
    <subcellularLocation>
        <location evidence="2">Cytoplasm</location>
    </subcellularLocation>
</comment>
<comment type="alternative products">
    <event type="alternative splicing"/>
    <isoform>
        <id>P33150-1</id>
        <name>1</name>
        <name>T-Cad1</name>
        <sequence type="displayed"/>
    </isoform>
    <isoform>
        <id>P33150-2</id>
        <name>2</name>
        <name>T-Cad2</name>
        <sequence type="described" ref="VSP_000642"/>
    </isoform>
</comment>
<comment type="tissue specificity">
    <text>Neural tissues. Also found in muscles; kidney and retina.</text>
</comment>
<comment type="domain">
    <text evidence="1">Three calcium ions are usually bound at the interface of each cadherin domain and rigidify the connections, imparting a strong curvature to the full-length ectodomain.</text>
</comment>
<protein>
    <recommendedName>
        <fullName>Cadherin-13</fullName>
    </recommendedName>
    <alternativeName>
        <fullName>Truncated cadherin</fullName>
        <shortName>T-cad</shortName>
        <shortName>T-cadherin</shortName>
    </alternativeName>
</protein>
<organism>
    <name type="scientific">Gallus gallus</name>
    <name type="common">Chicken</name>
    <dbReference type="NCBI Taxonomy" id="9031"/>
    <lineage>
        <taxon>Eukaryota</taxon>
        <taxon>Metazoa</taxon>
        <taxon>Chordata</taxon>
        <taxon>Craniata</taxon>
        <taxon>Vertebrata</taxon>
        <taxon>Euteleostomi</taxon>
        <taxon>Archelosauria</taxon>
        <taxon>Archosauria</taxon>
        <taxon>Dinosauria</taxon>
        <taxon>Saurischia</taxon>
        <taxon>Theropoda</taxon>
        <taxon>Coelurosauria</taxon>
        <taxon>Aves</taxon>
        <taxon>Neognathae</taxon>
        <taxon>Galloanserae</taxon>
        <taxon>Galliformes</taxon>
        <taxon>Phasianidae</taxon>
        <taxon>Phasianinae</taxon>
        <taxon>Gallus</taxon>
    </lineage>
</organism>
<name>CAD13_CHICK</name>
<gene>
    <name type="primary">CDH13</name>
</gene>
<accession>P33150</accession>
<accession>Q91353</accession>
<reference key="1">
    <citation type="journal article" date="1991" name="Neuron">
        <title>T-cadherin, a novel cadherin cell adhesion molecule in the nervous system lacks the conserved cytoplasmic region.</title>
        <authorList>
            <person name="Ranscht B."/>
            <person name="Dours-Zimmermann M.T."/>
        </authorList>
    </citation>
    <scope>NUCLEOTIDE SEQUENCE [MRNA] (ISOFORM 1)</scope>
    <scope>PARTIAL PROTEIN SEQUENCE</scope>
    <source>
        <tissue>Embryonic brain</tissue>
    </source>
</reference>
<reference key="2">
    <citation type="journal article" date="1993" name="J. Neurosci. Res.">
        <title>T-cadherin 2: molecular characterization, function in cell adhesion, and coexpression with T-cadherin and N-cadherin.</title>
        <authorList>
            <person name="Sacristan M.P."/>
            <person name="Vestal D.J."/>
            <person name="Dours-Zimmermann M.T."/>
            <person name="Ranscht B."/>
        </authorList>
    </citation>
    <scope>NUCLEOTIDE SEQUENCE [MRNA] (ISOFORM 2)</scope>
</reference>
<reference key="3">
    <citation type="journal article" date="1992" name="J. Cell Biol.">
        <title>Glycosyl phosphatidylinositol-anchored T-cadherin mediates calcium-dependent, homophilic cell adhesion.</title>
        <authorList>
            <person name="Vestal D.J."/>
            <person name="Ranscht B."/>
        </authorList>
    </citation>
    <scope>CHARACTERIZATION</scope>
</reference>
<reference key="4">
    <citation type="journal article" date="2010" name="Nat. Struct. Mol. Biol.">
        <title>T-cadherin structures reveal a novel adhesive binding mechanism.</title>
        <authorList>
            <person name="Ciatto C."/>
            <person name="Bahna F."/>
            <person name="Zampieri N."/>
            <person name="VanSteenhouse H.C."/>
            <person name="Katsamba P.S."/>
            <person name="Ahlsen G."/>
            <person name="Harrison O.J."/>
            <person name="Brasch J."/>
            <person name="Jin X."/>
            <person name="Posy S."/>
            <person name="Vendome J."/>
            <person name="Ranscht B."/>
            <person name="Jessell T.M."/>
            <person name="Honig B."/>
            <person name="Shapiro L."/>
        </authorList>
    </citation>
    <scope>X-RAY CRYSTALLOGRAPHY (2.9 ANGSTROMS) OF 140-355</scope>
    <scope>SUBUNIT</scope>
</reference>